<comment type="catalytic activity">
    <reaction evidence="1">
        <text>tRNA(Lys) + L-lysine + ATP = L-lysyl-tRNA(Lys) + AMP + diphosphate</text>
        <dbReference type="Rhea" id="RHEA:20792"/>
        <dbReference type="Rhea" id="RHEA-COMP:9696"/>
        <dbReference type="Rhea" id="RHEA-COMP:9697"/>
        <dbReference type="ChEBI" id="CHEBI:30616"/>
        <dbReference type="ChEBI" id="CHEBI:32551"/>
        <dbReference type="ChEBI" id="CHEBI:33019"/>
        <dbReference type="ChEBI" id="CHEBI:78442"/>
        <dbReference type="ChEBI" id="CHEBI:78529"/>
        <dbReference type="ChEBI" id="CHEBI:456215"/>
        <dbReference type="EC" id="6.1.1.6"/>
    </reaction>
</comment>
<comment type="cofactor">
    <cofactor evidence="1">
        <name>Mg(2+)</name>
        <dbReference type="ChEBI" id="CHEBI:18420"/>
    </cofactor>
    <text evidence="1">Binds 3 Mg(2+) ions per subunit.</text>
</comment>
<comment type="subunit">
    <text evidence="1">Homodimer.</text>
</comment>
<comment type="subcellular location">
    <subcellularLocation>
        <location evidence="1">Cytoplasm</location>
    </subcellularLocation>
</comment>
<comment type="similarity">
    <text evidence="1">Belongs to the class-II aminoacyl-tRNA synthetase family.</text>
</comment>
<sequence length="501" mass="57636">MFSNQYIQQRIHKANSLREEGKNPYKNGLKRSLTNAAFLEKYAYVKDLEEPKDKEKCESIVGRVKLLRLMGKACFIKIEDESAILQAYVSQNELNDEFKSLKKHLEVGDIVLVKGFPFATKTGELSVHALEFHILSKTIVPLPEKFHGLSDIELRYRQRYLDLIVNPGVKDVFKKRSLIVSSVRKFFEMEGFLEVETPMMHPIPGGANARPFITYHNALEVERYLRIAPELYLKRLIVGGFEAVFEINRNFRNEGMDHSHNPEFTMIEFYWAYHTYEDLIELSKRLFDYLLKTLNLDSKIIYNDMEVDFNQTSVISYLDALETIGGISRGILEKEDRLLAYLLEQGVKVEPNLTYGKLLAEAFDHFVEHKLINPTFVTQYPIEISPLARRNDSNPNIADRFELFIAGKEIANGFSELNDPLDQLERFKNQVAEKEKGDEEAQYMDEDYVWALAHGMPPTAGQGIGIDRLVMLLTGAKSIKDVILFPAMRPVKNDFNVESGE</sequence>
<name>SYK_HELPG</name>
<organism>
    <name type="scientific">Helicobacter pylori (strain G27)</name>
    <dbReference type="NCBI Taxonomy" id="563041"/>
    <lineage>
        <taxon>Bacteria</taxon>
        <taxon>Pseudomonadati</taxon>
        <taxon>Campylobacterota</taxon>
        <taxon>Epsilonproteobacteria</taxon>
        <taxon>Campylobacterales</taxon>
        <taxon>Helicobacteraceae</taxon>
        <taxon>Helicobacter</taxon>
    </lineage>
</organism>
<evidence type="ECO:0000255" key="1">
    <source>
        <dbReference type="HAMAP-Rule" id="MF_00252"/>
    </source>
</evidence>
<protein>
    <recommendedName>
        <fullName evidence="1">Lysine--tRNA ligase</fullName>
        <ecNumber evidence="1">6.1.1.6</ecNumber>
    </recommendedName>
    <alternativeName>
        <fullName evidence="1">Lysyl-tRNA synthetase</fullName>
        <shortName evidence="1">LysRS</shortName>
    </alternativeName>
</protein>
<dbReference type="EC" id="6.1.1.6" evidence="1"/>
<dbReference type="EMBL" id="CP001173">
    <property type="protein sequence ID" value="ACI26936.1"/>
    <property type="molecule type" value="Genomic_DNA"/>
</dbReference>
<dbReference type="RefSeq" id="WP_000492479.1">
    <property type="nucleotide sequence ID" value="NC_011333.1"/>
</dbReference>
<dbReference type="SMR" id="B5Z9V6"/>
<dbReference type="KEGG" id="hpg:HPG27_168"/>
<dbReference type="HOGENOM" id="CLU_008255_6_0_7"/>
<dbReference type="Proteomes" id="UP000001735">
    <property type="component" value="Chromosome"/>
</dbReference>
<dbReference type="GO" id="GO:0005829">
    <property type="term" value="C:cytosol"/>
    <property type="evidence" value="ECO:0007669"/>
    <property type="project" value="TreeGrafter"/>
</dbReference>
<dbReference type="GO" id="GO:0005524">
    <property type="term" value="F:ATP binding"/>
    <property type="evidence" value="ECO:0007669"/>
    <property type="project" value="UniProtKB-UniRule"/>
</dbReference>
<dbReference type="GO" id="GO:0004824">
    <property type="term" value="F:lysine-tRNA ligase activity"/>
    <property type="evidence" value="ECO:0007669"/>
    <property type="project" value="UniProtKB-UniRule"/>
</dbReference>
<dbReference type="GO" id="GO:0000287">
    <property type="term" value="F:magnesium ion binding"/>
    <property type="evidence" value="ECO:0007669"/>
    <property type="project" value="UniProtKB-UniRule"/>
</dbReference>
<dbReference type="GO" id="GO:0000049">
    <property type="term" value="F:tRNA binding"/>
    <property type="evidence" value="ECO:0007669"/>
    <property type="project" value="TreeGrafter"/>
</dbReference>
<dbReference type="GO" id="GO:0006430">
    <property type="term" value="P:lysyl-tRNA aminoacylation"/>
    <property type="evidence" value="ECO:0007669"/>
    <property type="project" value="UniProtKB-UniRule"/>
</dbReference>
<dbReference type="CDD" id="cd00775">
    <property type="entry name" value="LysRS_core"/>
    <property type="match status" value="1"/>
</dbReference>
<dbReference type="CDD" id="cd04322">
    <property type="entry name" value="LysRS_N"/>
    <property type="match status" value="1"/>
</dbReference>
<dbReference type="FunFam" id="3.30.930.10:FF:000164">
    <property type="entry name" value="Lysine--tRNA ligase"/>
    <property type="match status" value="1"/>
</dbReference>
<dbReference type="Gene3D" id="3.30.930.10">
    <property type="entry name" value="Bira Bifunctional Protein, Domain 2"/>
    <property type="match status" value="1"/>
</dbReference>
<dbReference type="Gene3D" id="2.40.50.140">
    <property type="entry name" value="Nucleic acid-binding proteins"/>
    <property type="match status" value="1"/>
</dbReference>
<dbReference type="HAMAP" id="MF_00252">
    <property type="entry name" value="Lys_tRNA_synth_class2"/>
    <property type="match status" value="1"/>
</dbReference>
<dbReference type="InterPro" id="IPR004364">
    <property type="entry name" value="Aa-tRNA-synt_II"/>
</dbReference>
<dbReference type="InterPro" id="IPR006195">
    <property type="entry name" value="aa-tRNA-synth_II"/>
</dbReference>
<dbReference type="InterPro" id="IPR045864">
    <property type="entry name" value="aa-tRNA-synth_II/BPL/LPL"/>
</dbReference>
<dbReference type="InterPro" id="IPR002313">
    <property type="entry name" value="Lys-tRNA-ligase_II"/>
</dbReference>
<dbReference type="InterPro" id="IPR044136">
    <property type="entry name" value="Lys-tRNA-ligase_II_N"/>
</dbReference>
<dbReference type="InterPro" id="IPR018149">
    <property type="entry name" value="Lys-tRNA-synth_II_C"/>
</dbReference>
<dbReference type="InterPro" id="IPR012340">
    <property type="entry name" value="NA-bd_OB-fold"/>
</dbReference>
<dbReference type="InterPro" id="IPR004365">
    <property type="entry name" value="NA-bd_OB_tRNA"/>
</dbReference>
<dbReference type="NCBIfam" id="TIGR00499">
    <property type="entry name" value="lysS_bact"/>
    <property type="match status" value="1"/>
</dbReference>
<dbReference type="NCBIfam" id="NF001756">
    <property type="entry name" value="PRK00484.1"/>
    <property type="match status" value="1"/>
</dbReference>
<dbReference type="PANTHER" id="PTHR42918:SF15">
    <property type="entry name" value="LYSINE--TRNA LIGASE, CHLOROPLASTIC_MITOCHONDRIAL"/>
    <property type="match status" value="1"/>
</dbReference>
<dbReference type="PANTHER" id="PTHR42918">
    <property type="entry name" value="LYSYL-TRNA SYNTHETASE"/>
    <property type="match status" value="1"/>
</dbReference>
<dbReference type="Pfam" id="PF00152">
    <property type="entry name" value="tRNA-synt_2"/>
    <property type="match status" value="1"/>
</dbReference>
<dbReference type="Pfam" id="PF01336">
    <property type="entry name" value="tRNA_anti-codon"/>
    <property type="match status" value="1"/>
</dbReference>
<dbReference type="PRINTS" id="PR00982">
    <property type="entry name" value="TRNASYNTHLYS"/>
</dbReference>
<dbReference type="SUPFAM" id="SSF55681">
    <property type="entry name" value="Class II aaRS and biotin synthetases"/>
    <property type="match status" value="1"/>
</dbReference>
<dbReference type="SUPFAM" id="SSF50249">
    <property type="entry name" value="Nucleic acid-binding proteins"/>
    <property type="match status" value="1"/>
</dbReference>
<dbReference type="PROSITE" id="PS50862">
    <property type="entry name" value="AA_TRNA_LIGASE_II"/>
    <property type="match status" value="1"/>
</dbReference>
<proteinExistence type="inferred from homology"/>
<keyword id="KW-0030">Aminoacyl-tRNA synthetase</keyword>
<keyword id="KW-0067">ATP-binding</keyword>
<keyword id="KW-0963">Cytoplasm</keyword>
<keyword id="KW-0436">Ligase</keyword>
<keyword id="KW-0460">Magnesium</keyword>
<keyword id="KW-0479">Metal-binding</keyword>
<keyword id="KW-0547">Nucleotide-binding</keyword>
<keyword id="KW-0648">Protein biosynthesis</keyword>
<keyword id="KW-1185">Reference proteome</keyword>
<accession>B5Z9V6</accession>
<gene>
    <name evidence="1" type="primary">lysS</name>
    <name type="ordered locus">HPG27_168</name>
</gene>
<reference key="1">
    <citation type="journal article" date="2009" name="J. Bacteriol.">
        <title>The complete genome sequence of Helicobacter pylori strain G27.</title>
        <authorList>
            <person name="Baltrus D.A."/>
            <person name="Amieva M.R."/>
            <person name="Covacci A."/>
            <person name="Lowe T.M."/>
            <person name="Merrell D.S."/>
            <person name="Ottemann K.M."/>
            <person name="Stein M."/>
            <person name="Salama N.R."/>
            <person name="Guillemin K."/>
        </authorList>
    </citation>
    <scope>NUCLEOTIDE SEQUENCE [LARGE SCALE GENOMIC DNA]</scope>
    <source>
        <strain>G27</strain>
    </source>
</reference>
<feature type="chain" id="PRO_1000101121" description="Lysine--tRNA ligase">
    <location>
        <begin position="1"/>
        <end position="501"/>
    </location>
</feature>
<feature type="binding site" evidence="1">
    <location>
        <position position="402"/>
    </location>
    <ligand>
        <name>Mg(2+)</name>
        <dbReference type="ChEBI" id="CHEBI:18420"/>
        <label>1</label>
    </ligand>
</feature>
<feature type="binding site" evidence="1">
    <location>
        <position position="409"/>
    </location>
    <ligand>
        <name>Mg(2+)</name>
        <dbReference type="ChEBI" id="CHEBI:18420"/>
        <label>1</label>
    </ligand>
</feature>
<feature type="binding site" evidence="1">
    <location>
        <position position="409"/>
    </location>
    <ligand>
        <name>Mg(2+)</name>
        <dbReference type="ChEBI" id="CHEBI:18420"/>
        <label>2</label>
    </ligand>
</feature>